<comment type="function">
    <text evidence="1">Associates with Polycomb group (PcG) multiprotein complexes; the complex class is required to maintain the transcriptionally repressive state of some genes.</text>
</comment>
<comment type="subunit">
    <text evidence="1 4">Associates with a PRC1-like complex (By similarity). Interacts with the SAM domain of PHC1 via its SAM domain in vitro.</text>
</comment>
<comment type="interaction">
    <interactant intactId="EBI-445955">
        <id>Q8K214</id>
    </interactant>
    <interactant intactId="EBI-445922">
        <id>O88513</id>
        <label>Gmnn</label>
    </interactant>
    <organismsDiffer>false</organismsDiffer>
    <experiments>2</experiments>
</comment>
<comment type="interaction">
    <interactant intactId="EBI-445955">
        <id>Q8K214</id>
    </interactant>
    <interactant intactId="EBI-927346">
        <id>Q64028</id>
        <label>Phc1</label>
    </interactant>
    <organismsDiffer>false</organismsDiffer>
    <experiments>2</experiments>
</comment>
<comment type="subcellular location">
    <subcellularLocation>
        <location evidence="6">Nucleus</location>
    </subcellularLocation>
</comment>
<comment type="alternative products">
    <event type="alternative splicing"/>
    <isoform>
        <id>Q8K214-1</id>
        <name evidence="6">1</name>
        <sequence type="displayed"/>
    </isoform>
    <isoform>
        <id>Q8K214-2</id>
        <name evidence="4">2</name>
        <sequence type="described" ref="VSP_051680 VSP_051681"/>
    </isoform>
</comment>
<comment type="tissue specificity">
    <text evidence="4">Most abundant in testis. Moderate levels detected in heart, brain, lung, liver, skeletal muscle and kidney and lower levels in spleen.</text>
</comment>
<comment type="developmental stage">
    <text evidence="4">Detected throughout embryogenesis. Expressed ubiquitously in 8.5 dpc embryos. At 10.5 dpc, strongly expressed in nervous system including hindbrain and spinal cord, and in the pharyngeal arches and visceral organs. By 14.5 dpc, strong expression is detected throughout the central nervous system, and in tongue, heart, midgut and urogenital regions.</text>
</comment>
<comment type="induction">
    <text evidence="4">By retinoic acid in F9 and F19 embryonal carcinoma cell lines.</text>
</comment>
<comment type="similarity">
    <text evidence="6">Belongs to the SCM family.</text>
</comment>
<accession>Q8K214</accession>
<accession>B1AS51</accession>
<accession>Q9JME0</accession>
<evidence type="ECO:0000250" key="1"/>
<evidence type="ECO:0000255" key="2">
    <source>
        <dbReference type="PROSITE-ProRule" id="PRU00184"/>
    </source>
</evidence>
<evidence type="ECO:0000256" key="3">
    <source>
        <dbReference type="SAM" id="MobiDB-lite"/>
    </source>
</evidence>
<evidence type="ECO:0000269" key="4">
    <source>
    </source>
</evidence>
<evidence type="ECO:0000303" key="5">
    <source>
    </source>
</evidence>
<evidence type="ECO:0000305" key="6"/>
<evidence type="ECO:0000312" key="7">
    <source>
        <dbReference type="EMBL" id="AAH34667.1"/>
    </source>
</evidence>
<evidence type="ECO:0000312" key="8">
    <source>
        <dbReference type="EMBL" id="BAA90554.1"/>
    </source>
</evidence>
<evidence type="ECO:0000312" key="9">
    <source>
        <dbReference type="MGI" id="MGI:1352762"/>
    </source>
</evidence>
<protein>
    <recommendedName>
        <fullName>Polycomb protein SCMH1</fullName>
    </recommendedName>
    <alternativeName>
        <fullName>Sex comb on midleg homolog 1</fullName>
    </alternativeName>
</protein>
<feature type="chain" id="PRO_0000114335" description="Polycomb protein SCMH1">
    <location>
        <begin position="1"/>
        <end position="706"/>
    </location>
</feature>
<feature type="repeat" description="MBT 1">
    <location>
        <begin position="28"/>
        <end position="126"/>
    </location>
</feature>
<feature type="repeat" description="MBT 2">
    <location>
        <begin position="134"/>
        <end position="235"/>
    </location>
</feature>
<feature type="domain" description="SAM" evidence="2">
    <location>
        <begin position="597"/>
        <end position="662"/>
    </location>
</feature>
<feature type="region of interest" description="Disordered" evidence="3">
    <location>
        <begin position="233"/>
        <end position="350"/>
    </location>
</feature>
<feature type="region of interest" description="Disordered" evidence="3">
    <location>
        <begin position="576"/>
        <end position="595"/>
    </location>
</feature>
<feature type="compositionally biased region" description="Basic residues" evidence="3">
    <location>
        <begin position="272"/>
        <end position="283"/>
    </location>
</feature>
<feature type="compositionally biased region" description="Basic residues" evidence="3">
    <location>
        <begin position="304"/>
        <end position="319"/>
    </location>
</feature>
<feature type="compositionally biased region" description="Low complexity" evidence="3">
    <location>
        <begin position="329"/>
        <end position="340"/>
    </location>
</feature>
<feature type="compositionally biased region" description="Basic and acidic residues" evidence="3">
    <location>
        <begin position="576"/>
        <end position="591"/>
    </location>
</feature>
<feature type="splice variant" id="VSP_051680" description="In isoform 2." evidence="5">
    <original>VFW</original>
    <variation>GKF</variation>
    <location>
        <begin position="662"/>
        <end position="664"/>
    </location>
</feature>
<feature type="splice variant" id="VSP_051681" description="In isoform 2." evidence="5">
    <location>
        <begin position="665"/>
        <end position="706"/>
    </location>
</feature>
<reference evidence="6 8" key="1">
    <citation type="journal article" date="1999" name="Differentiation">
        <title>A novel member of murine polycomb-group proteins, Sex comb on midleg homolog protein, is highly conserved, and interacts with RAE28/mph1 in vitro.</title>
        <authorList>
            <person name="Tomotsune D."/>
            <person name="Takihara Y."/>
            <person name="Berger J."/>
            <person name="Duhl D."/>
            <person name="Joo S."/>
            <person name="Kyba M."/>
            <person name="Shirai M."/>
            <person name="Ohta H."/>
            <person name="Matsuda Y."/>
            <person name="Honda B.M."/>
            <person name="Simon J."/>
            <person name="Shimada K."/>
            <person name="Brock H.W."/>
            <person name="Randazzo F."/>
        </authorList>
    </citation>
    <scope>NUCLEOTIDE SEQUENCE [MRNA] (ISOFORM 2)</scope>
    <scope>TISSUE SPECIFICITY</scope>
    <scope>DEVELOPMENTAL STAGE</scope>
    <scope>INDUCTION</scope>
    <scope>INTERACTION WITH PHC1</scope>
    <source>
        <tissue evidence="4">Brain</tissue>
        <tissue evidence="4">Neonatal brain</tissue>
    </source>
</reference>
<reference key="2">
    <citation type="journal article" date="2009" name="PLoS Biol.">
        <title>Lineage-specific biology revealed by a finished genome assembly of the mouse.</title>
        <authorList>
            <person name="Church D.M."/>
            <person name="Goodstadt L."/>
            <person name="Hillier L.W."/>
            <person name="Zody M.C."/>
            <person name="Goldstein S."/>
            <person name="She X."/>
            <person name="Bult C.J."/>
            <person name="Agarwala R."/>
            <person name="Cherry J.L."/>
            <person name="DiCuccio M."/>
            <person name="Hlavina W."/>
            <person name="Kapustin Y."/>
            <person name="Meric P."/>
            <person name="Maglott D."/>
            <person name="Birtle Z."/>
            <person name="Marques A.C."/>
            <person name="Graves T."/>
            <person name="Zhou S."/>
            <person name="Teague B."/>
            <person name="Potamousis K."/>
            <person name="Churas C."/>
            <person name="Place M."/>
            <person name="Herschleb J."/>
            <person name="Runnheim R."/>
            <person name="Forrest D."/>
            <person name="Amos-Landgraf J."/>
            <person name="Schwartz D.C."/>
            <person name="Cheng Z."/>
            <person name="Lindblad-Toh K."/>
            <person name="Eichler E.E."/>
            <person name="Ponting C.P."/>
        </authorList>
    </citation>
    <scope>NUCLEOTIDE SEQUENCE [LARGE SCALE GENOMIC DNA]</scope>
    <source>
        <strain>C57BL/6J</strain>
    </source>
</reference>
<reference evidence="6 7" key="3">
    <citation type="journal article" date="2004" name="Genome Res.">
        <title>The status, quality, and expansion of the NIH full-length cDNA project: the Mammalian Gene Collection (MGC).</title>
        <authorList>
            <consortium name="The MGC Project Team"/>
        </authorList>
    </citation>
    <scope>NUCLEOTIDE SEQUENCE [LARGE SCALE MRNA] (ISOFORM 1)</scope>
    <source>
        <strain evidence="7">FVB/N</strain>
        <tissue evidence="7">Mammary gland</tissue>
    </source>
</reference>
<organism>
    <name type="scientific">Mus musculus</name>
    <name type="common">Mouse</name>
    <dbReference type="NCBI Taxonomy" id="10090"/>
    <lineage>
        <taxon>Eukaryota</taxon>
        <taxon>Metazoa</taxon>
        <taxon>Chordata</taxon>
        <taxon>Craniata</taxon>
        <taxon>Vertebrata</taxon>
        <taxon>Euteleostomi</taxon>
        <taxon>Mammalia</taxon>
        <taxon>Eutheria</taxon>
        <taxon>Euarchontoglires</taxon>
        <taxon>Glires</taxon>
        <taxon>Rodentia</taxon>
        <taxon>Myomorpha</taxon>
        <taxon>Muroidea</taxon>
        <taxon>Muridae</taxon>
        <taxon>Murinae</taxon>
        <taxon>Mus</taxon>
        <taxon>Mus</taxon>
    </lineage>
</organism>
<proteinExistence type="evidence at protein level"/>
<keyword id="KW-0025">Alternative splicing</keyword>
<keyword id="KW-0217">Developmental protein</keyword>
<keyword id="KW-0539">Nucleus</keyword>
<keyword id="KW-1185">Reference proteome</keyword>
<keyword id="KW-0677">Repeat</keyword>
<keyword id="KW-0678">Repressor</keyword>
<keyword id="KW-0804">Transcription</keyword>
<keyword id="KW-0805">Transcription regulation</keyword>
<gene>
    <name evidence="9" type="primary">Scmh1</name>
</gene>
<name>SCMH1_MOUSE</name>
<sequence>MLVCYSVLACESLWDLPCSIMGSPLGHFTWDKYLKETCSVPAPVHCFKQSYTPPSNEFKISMKLEAQDPRNTTSTCIATVVGLTGARLRLRLDGSDNKNDFWRLVDSSEIQPIGNCEKNGGMLQPPLGFRLNASSWPMFLLKTLNGAEMAPIKIFHKEPPSPSHNFFKMGMKLEAVDRKNPHFICPATIGEVRGAEVLVTFDGWRGAFDYWCRFDSRDIFPVGWCSLTGDNLQPPGTKVVIPKNPSPSSDVSTEKPSIHSTKTVLEHQPGQRGRKPGKKRGRTPKILIPHPTSTPSKSAEPLKFPKKRGPKPGSKRKPRTLLSPPPTSPTTSTPEPDTSTVPQDAATVPSSAMQAPTVCIYLNKSGSTGPHLDKKKIQQLPDHFGPARASVVLQQAVQACIDCAYHQKTVFSFLKQGHGGEVISAVFDREQHTLNLPAVNSITYVLRFLEKLCHNLRSDNLFGNQPFTQTHLSLTATEYNHNHDRYLPGETFVLGNSLARSLETHSDLMDSALKPANLVSTSQNLRTPGYRPLLPSCGLPLSTVSAVRRLCSKGVLKGKKERRDVESFWKLNHSPGSDRHLESRDPPRLSGRDPSSWTVEDVMQFVREADPQLGSHADLFRKHEIDGKALLLLRSDMMMKYMGLKLGPALKLSFHIDRLKQVFWKRETILWSREGLSREVWPISEDTALGHFFSGMDKVFGSLSKR</sequence>
<dbReference type="EMBL" id="AB030906">
    <property type="protein sequence ID" value="BAA90554.1"/>
    <property type="molecule type" value="mRNA"/>
</dbReference>
<dbReference type="EMBL" id="AL611924">
    <property type="status" value="NOT_ANNOTATED_CDS"/>
    <property type="molecule type" value="Genomic_DNA"/>
</dbReference>
<dbReference type="EMBL" id="BC034667">
    <property type="protein sequence ID" value="AAH34667.1"/>
    <property type="molecule type" value="mRNA"/>
</dbReference>
<dbReference type="CCDS" id="CCDS18589.1">
    <molecule id="Q8K214-2"/>
</dbReference>
<dbReference type="CCDS" id="CCDS51292.1">
    <molecule id="Q8K214-1"/>
</dbReference>
<dbReference type="RefSeq" id="NP_001153102.1">
    <molecule id="Q8K214-1"/>
    <property type="nucleotide sequence ID" value="NM_001159630.2"/>
</dbReference>
<dbReference type="RefSeq" id="NP_001366114.1">
    <molecule id="Q8K214-2"/>
    <property type="nucleotide sequence ID" value="NM_001379185.1"/>
</dbReference>
<dbReference type="RefSeq" id="NP_001391019.1">
    <molecule id="Q8K214-1"/>
    <property type="nucleotide sequence ID" value="NM_001404090.1"/>
</dbReference>
<dbReference type="RefSeq" id="NP_038911.1">
    <molecule id="Q8K214-2"/>
    <property type="nucleotide sequence ID" value="NM_013883.3"/>
</dbReference>
<dbReference type="RefSeq" id="XP_011238853.1">
    <property type="nucleotide sequence ID" value="XM_011240551.1"/>
</dbReference>
<dbReference type="RefSeq" id="XP_017175741.1">
    <property type="nucleotide sequence ID" value="XM_017320252.1"/>
</dbReference>
<dbReference type="RefSeq" id="XP_017175742.1">
    <molecule id="Q8K214-2"/>
    <property type="nucleotide sequence ID" value="XM_017320253.2"/>
</dbReference>
<dbReference type="SMR" id="Q8K214"/>
<dbReference type="BioGRID" id="205936">
    <property type="interactions" value="5"/>
</dbReference>
<dbReference type="DIP" id="DIP-32567N"/>
<dbReference type="FunCoup" id="Q8K214">
    <property type="interactions" value="961"/>
</dbReference>
<dbReference type="IntAct" id="Q8K214">
    <property type="interactions" value="5"/>
</dbReference>
<dbReference type="STRING" id="10090.ENSMUSP00000101908"/>
<dbReference type="iPTMnet" id="Q8K214"/>
<dbReference type="PhosphoSitePlus" id="Q8K214"/>
<dbReference type="PaxDb" id="10090-ENSMUSP00000101908"/>
<dbReference type="PeptideAtlas" id="Q8K214"/>
<dbReference type="ProteomicsDB" id="256927">
    <molecule id="Q8K214-1"/>
</dbReference>
<dbReference type="ProteomicsDB" id="256928">
    <molecule id="Q8K214-2"/>
</dbReference>
<dbReference type="Antibodypedia" id="32169">
    <property type="antibodies" value="231 antibodies from 24 providers"/>
</dbReference>
<dbReference type="DNASU" id="29871"/>
<dbReference type="Ensembl" id="ENSMUST00000000087.13">
    <molecule id="Q8K214-2"/>
    <property type="protein sequence ID" value="ENSMUSP00000000087.7"/>
    <property type="gene ID" value="ENSMUSG00000000085.17"/>
</dbReference>
<dbReference type="Ensembl" id="ENSMUST00000064991.13">
    <molecule id="Q8K214-1"/>
    <property type="protein sequence ID" value="ENSMUSP00000069813.7"/>
    <property type="gene ID" value="ENSMUSG00000000085.17"/>
</dbReference>
<dbReference type="Ensembl" id="ENSMUST00000106298.10">
    <molecule id="Q8K214-2"/>
    <property type="protein sequence ID" value="ENSMUSP00000101905.4"/>
    <property type="gene ID" value="ENSMUSG00000000085.17"/>
</dbReference>
<dbReference type="Ensembl" id="ENSMUST00000106301.8">
    <molecule id="Q8K214-1"/>
    <property type="protein sequence ID" value="ENSMUSP00000101908.2"/>
    <property type="gene ID" value="ENSMUSG00000000085.17"/>
</dbReference>
<dbReference type="GeneID" id="29871"/>
<dbReference type="KEGG" id="mmu:29871"/>
<dbReference type="UCSC" id="uc008und.2">
    <molecule id="Q8K214-2"/>
    <property type="organism name" value="mouse"/>
</dbReference>
<dbReference type="UCSC" id="uc008une.2">
    <molecule id="Q8K214-1"/>
    <property type="organism name" value="mouse"/>
</dbReference>
<dbReference type="AGR" id="MGI:1352762"/>
<dbReference type="CTD" id="22955"/>
<dbReference type="MGI" id="MGI:1352762">
    <property type="gene designation" value="Scmh1"/>
</dbReference>
<dbReference type="VEuPathDB" id="HostDB:ENSMUSG00000000085"/>
<dbReference type="eggNOG" id="KOG3766">
    <property type="taxonomic scope" value="Eukaryota"/>
</dbReference>
<dbReference type="GeneTree" id="ENSGT00940000157999"/>
<dbReference type="HOGENOM" id="CLU_015000_1_1_1"/>
<dbReference type="InParanoid" id="Q8K214"/>
<dbReference type="OMA" id="NKEFCSM"/>
<dbReference type="OrthoDB" id="5912862at2759"/>
<dbReference type="PhylomeDB" id="Q8K214"/>
<dbReference type="TreeFam" id="TF106488"/>
<dbReference type="Reactome" id="R-MMU-3108214">
    <property type="pathway name" value="SUMOylation of DNA damage response and repair proteins"/>
</dbReference>
<dbReference type="Reactome" id="R-MMU-3899300">
    <property type="pathway name" value="SUMOylation of transcription cofactors"/>
</dbReference>
<dbReference type="Reactome" id="R-MMU-4551638">
    <property type="pathway name" value="SUMOylation of chromatin organization proteins"/>
</dbReference>
<dbReference type="Reactome" id="R-MMU-4570464">
    <property type="pathway name" value="SUMOylation of RNA binding proteins"/>
</dbReference>
<dbReference type="Reactome" id="R-MMU-8939243">
    <property type="pathway name" value="RUNX1 interacts with co-factors whose precise effect on RUNX1 targets is not known"/>
</dbReference>
<dbReference type="BioGRID-ORCS" id="29871">
    <property type="hits" value="2 hits in 83 CRISPR screens"/>
</dbReference>
<dbReference type="ChiTaRS" id="Scmh1">
    <property type="organism name" value="mouse"/>
</dbReference>
<dbReference type="PRO" id="PR:Q8K214"/>
<dbReference type="Proteomes" id="UP000000589">
    <property type="component" value="Chromosome 4"/>
</dbReference>
<dbReference type="RNAct" id="Q8K214">
    <property type="molecule type" value="protein"/>
</dbReference>
<dbReference type="Bgee" id="ENSMUSG00000000085">
    <property type="expression patterns" value="Expressed in saccule of membranous labyrinth and 250 other cell types or tissues"/>
</dbReference>
<dbReference type="ExpressionAtlas" id="Q8K214">
    <property type="expression patterns" value="baseline and differential"/>
</dbReference>
<dbReference type="GO" id="GO:0010369">
    <property type="term" value="C:chromocenter"/>
    <property type="evidence" value="ECO:0000314"/>
    <property type="project" value="MGI"/>
</dbReference>
<dbReference type="GO" id="GO:0001673">
    <property type="term" value="C:male germ cell nucleus"/>
    <property type="evidence" value="ECO:0000314"/>
    <property type="project" value="MGI"/>
</dbReference>
<dbReference type="GO" id="GO:0009952">
    <property type="term" value="P:anterior/posterior pattern specification"/>
    <property type="evidence" value="ECO:0000315"/>
    <property type="project" value="MGI"/>
</dbReference>
<dbReference type="GO" id="GO:0006338">
    <property type="term" value="P:chromatin remodeling"/>
    <property type="evidence" value="ECO:0000315"/>
    <property type="project" value="MGI"/>
</dbReference>
<dbReference type="GO" id="GO:0031507">
    <property type="term" value="P:heterochromatin formation"/>
    <property type="evidence" value="ECO:0000250"/>
    <property type="project" value="UniProtKB"/>
</dbReference>
<dbReference type="GO" id="GO:0045892">
    <property type="term" value="P:negative regulation of DNA-templated transcription"/>
    <property type="evidence" value="ECO:0000303"/>
    <property type="project" value="UniProtKB"/>
</dbReference>
<dbReference type="GO" id="GO:0007283">
    <property type="term" value="P:spermatogenesis"/>
    <property type="evidence" value="ECO:0000315"/>
    <property type="project" value="MGI"/>
</dbReference>
<dbReference type="CDD" id="cd20105">
    <property type="entry name" value="MBT_SCMH1_rpt1"/>
    <property type="match status" value="1"/>
</dbReference>
<dbReference type="CDD" id="cd20108">
    <property type="entry name" value="MBT_SCMH1_rpt2"/>
    <property type="match status" value="1"/>
</dbReference>
<dbReference type="CDD" id="cd09578">
    <property type="entry name" value="SAM_Scm"/>
    <property type="match status" value="1"/>
</dbReference>
<dbReference type="FunFam" id="1.10.150.50:FF:000018">
    <property type="entry name" value="Polycomb protein scmh1 isoform 4"/>
    <property type="match status" value="1"/>
</dbReference>
<dbReference type="FunFam" id="3.90.1150.190:FF:000001">
    <property type="entry name" value="Polycomb protein scmh1 isoform 4"/>
    <property type="match status" value="1"/>
</dbReference>
<dbReference type="FunFam" id="2.30.30.140:FF:000016">
    <property type="entry name" value="polycomb protein SCMH1 isoform X1"/>
    <property type="match status" value="1"/>
</dbReference>
<dbReference type="Gene3D" id="2.30.30.140">
    <property type="match status" value="2"/>
</dbReference>
<dbReference type="Gene3D" id="3.90.1150.190">
    <property type="entry name" value="SLED domain"/>
    <property type="match status" value="1"/>
</dbReference>
<dbReference type="Gene3D" id="1.10.150.50">
    <property type="entry name" value="Transcription Factor, Ets-1"/>
    <property type="match status" value="1"/>
</dbReference>
<dbReference type="InterPro" id="IPR004092">
    <property type="entry name" value="Mbt"/>
</dbReference>
<dbReference type="InterPro" id="IPR047279">
    <property type="entry name" value="MBT_SCMH1_rpt1"/>
</dbReference>
<dbReference type="InterPro" id="IPR047280">
    <property type="entry name" value="MBT_SCMH1_rpt2"/>
</dbReference>
<dbReference type="InterPro" id="IPR050548">
    <property type="entry name" value="PcG_chromatin_remod_factors"/>
</dbReference>
<dbReference type="InterPro" id="IPR001660">
    <property type="entry name" value="SAM"/>
</dbReference>
<dbReference type="InterPro" id="IPR013761">
    <property type="entry name" value="SAM/pointed_sf"/>
</dbReference>
<dbReference type="InterPro" id="IPR047531">
    <property type="entry name" value="SAM_Scm-like"/>
</dbReference>
<dbReference type="InterPro" id="IPR033763">
    <property type="entry name" value="SCML2_RBR"/>
</dbReference>
<dbReference type="InterPro" id="IPR021987">
    <property type="entry name" value="SLED"/>
</dbReference>
<dbReference type="InterPro" id="IPR038348">
    <property type="entry name" value="SLED_sf"/>
</dbReference>
<dbReference type="PANTHER" id="PTHR12247">
    <property type="entry name" value="POLYCOMB GROUP PROTEIN"/>
    <property type="match status" value="1"/>
</dbReference>
<dbReference type="PANTHER" id="PTHR12247:SF68">
    <property type="entry name" value="POLYCOMB PROTEIN SCMH1"/>
    <property type="match status" value="1"/>
</dbReference>
<dbReference type="Pfam" id="PF02820">
    <property type="entry name" value="MBT"/>
    <property type="match status" value="2"/>
</dbReference>
<dbReference type="Pfam" id="PF17208">
    <property type="entry name" value="RBR"/>
    <property type="match status" value="1"/>
</dbReference>
<dbReference type="Pfam" id="PF00536">
    <property type="entry name" value="SAM_1"/>
    <property type="match status" value="1"/>
</dbReference>
<dbReference type="Pfam" id="PF12140">
    <property type="entry name" value="SLED"/>
    <property type="match status" value="1"/>
</dbReference>
<dbReference type="SMART" id="SM00561">
    <property type="entry name" value="MBT"/>
    <property type="match status" value="2"/>
</dbReference>
<dbReference type="SMART" id="SM00454">
    <property type="entry name" value="SAM"/>
    <property type="match status" value="1"/>
</dbReference>
<dbReference type="SUPFAM" id="SSF47769">
    <property type="entry name" value="SAM/Pointed domain"/>
    <property type="match status" value="1"/>
</dbReference>
<dbReference type="SUPFAM" id="SSF63748">
    <property type="entry name" value="Tudor/PWWP/MBT"/>
    <property type="match status" value="2"/>
</dbReference>
<dbReference type="PROSITE" id="PS51079">
    <property type="entry name" value="MBT"/>
    <property type="match status" value="2"/>
</dbReference>
<dbReference type="PROSITE" id="PS50105">
    <property type="entry name" value="SAM_DOMAIN"/>
    <property type="match status" value="1"/>
</dbReference>